<evidence type="ECO:0000256" key="1">
    <source>
        <dbReference type="SAM" id="MobiDB-lite"/>
    </source>
</evidence>
<evidence type="ECO:0000303" key="2">
    <source>
    </source>
</evidence>
<keyword id="KW-0025">Alternative splicing</keyword>
<keyword id="KW-1267">Proteomics identification</keyword>
<keyword id="KW-1185">Reference proteome</keyword>
<dbReference type="EMBL" id="AY341344">
    <property type="protein sequence ID" value="AAQ76830.1"/>
    <property type="molecule type" value="mRNA"/>
</dbReference>
<dbReference type="EMBL" id="AY339380">
    <property type="protein sequence ID" value="AAQ82540.1"/>
    <property type="molecule type" value="mRNA"/>
</dbReference>
<dbReference type="RefSeq" id="NP_001018112.1">
    <property type="nucleotide sequence ID" value="NM_001018102.2"/>
</dbReference>
<dbReference type="RefSeq" id="NP_056347.1">
    <property type="nucleotide sequence ID" value="NM_015532.4"/>
</dbReference>
<dbReference type="BioGRID" id="123498">
    <property type="interactions" value="137"/>
</dbReference>
<dbReference type="iPTMnet" id="Q6EEV4"/>
<dbReference type="PhosphoSitePlus" id="Q6EEV4"/>
<dbReference type="BioMuta" id="POLR2M"/>
<dbReference type="jPOST" id="Q6EEV4"/>
<dbReference type="MassIVE" id="Q6EEV4"/>
<dbReference type="PeptideAtlas" id="Q6EEV4"/>
<dbReference type="ProteomicsDB" id="66278">
    <molecule id="Q6EEV4-1"/>
</dbReference>
<dbReference type="ProteomicsDB" id="66279">
    <molecule id="Q6EEV4-2"/>
</dbReference>
<dbReference type="Pumba" id="Q6EEV4"/>
<dbReference type="TopDownProteomics" id="Q6EEV4-2">
    <molecule id="Q6EEV4-2"/>
</dbReference>
<dbReference type="Antibodypedia" id="57855">
    <property type="antibodies" value="96 antibodies from 14 providers"/>
</dbReference>
<dbReference type="DNASU" id="81488"/>
<dbReference type="Ensembl" id="ENST00000649091.1">
    <molecule id="Q6EEV4-2"/>
    <property type="protein sequence ID" value="ENSP00000497820.1"/>
    <property type="gene ID" value="ENSG00000255529.9"/>
</dbReference>
<dbReference type="GeneID" id="81488"/>
<dbReference type="KEGG" id="hsa:81488"/>
<dbReference type="AGR" id="HGNC:14862"/>
<dbReference type="CTD" id="81488"/>
<dbReference type="DisGeNET" id="81488"/>
<dbReference type="GeneCards" id="POLR2M"/>
<dbReference type="HGNC" id="HGNC:14862">
    <property type="gene designation" value="POLR2M"/>
</dbReference>
<dbReference type="HPA" id="ENSG00000255529">
    <property type="expression patterns" value="Low tissue specificity"/>
</dbReference>
<dbReference type="MIM" id="606485">
    <property type="type" value="gene"/>
</dbReference>
<dbReference type="neXtProt" id="NX_Q6EEV4"/>
<dbReference type="OpenTargets" id="ENSG00000255529"/>
<dbReference type="PharmGKB" id="PA28986"/>
<dbReference type="VEuPathDB" id="HostDB:ENSG00000255529"/>
<dbReference type="GeneTree" id="ENSGT00950000183065"/>
<dbReference type="OrthoDB" id="2408655at2759"/>
<dbReference type="PathwayCommons" id="Q6EEV4"/>
<dbReference type="SignaLink" id="Q6EEV4"/>
<dbReference type="SIGNOR" id="Q6EEV4"/>
<dbReference type="BioGRID-ORCS" id="81488">
    <property type="hits" value="155 hits in 1107 CRISPR screens"/>
</dbReference>
<dbReference type="ChiTaRS" id="POLR2M">
    <property type="organism name" value="human"/>
</dbReference>
<dbReference type="GenomeRNAi" id="81488"/>
<dbReference type="Pharos" id="Q6EEV4">
    <property type="development level" value="Tbio"/>
</dbReference>
<dbReference type="Proteomes" id="UP000005640">
    <property type="component" value="Chromosome 15"/>
</dbReference>
<dbReference type="Bgee" id="ENSG00000255529">
    <property type="expression patterns" value="Expressed in germinal epithelium of ovary and 207 other cell types or tissues"/>
</dbReference>
<dbReference type="ExpressionAtlas" id="Q6EEV4">
    <property type="expression patterns" value="baseline and differential"/>
</dbReference>
<name>GL1AD_HUMAN</name>
<organism>
    <name type="scientific">Homo sapiens</name>
    <name type="common">Human</name>
    <dbReference type="NCBI Taxonomy" id="9606"/>
    <lineage>
        <taxon>Eukaryota</taxon>
        <taxon>Metazoa</taxon>
        <taxon>Chordata</taxon>
        <taxon>Craniata</taxon>
        <taxon>Vertebrata</taxon>
        <taxon>Euteleostomi</taxon>
        <taxon>Mammalia</taxon>
        <taxon>Eutheria</taxon>
        <taxon>Euarchontoglires</taxon>
        <taxon>Primates</taxon>
        <taxon>Haplorrhini</taxon>
        <taxon>Catarrhini</taxon>
        <taxon>Hominidae</taxon>
        <taxon>Homo</taxon>
    </lineage>
</organism>
<gene>
    <name type="primary">POLR2M</name>
    <name type="synonym">GRINL1A</name>
</gene>
<protein>
    <recommendedName>
        <fullName>DNA-directed RNA polymerase II subunit GRINL1A, isoforms 4/5</fullName>
    </recommendedName>
    <alternativeName>
        <fullName>DNA-directed RNA polymerase II subunit M, isoforms 4/5</fullName>
    </alternativeName>
</protein>
<sequence>MATPARAPESPPSADPALVAGPAEEAECPPPRQPQPAQNVLAAPRLRAPSSRGLGAAEFGGAAGNVEAPGETFAQRVSWGPAESPPGSFSSSSLGAPLPSRTLFPSLEGDFDSVTFASVLRASGRRACCGRAVPLPGQKIHLQIARQR</sequence>
<proteinExistence type="evidence at protein level"/>
<reference key="1">
    <citation type="journal article" date="2004" name="Genomics">
        <title>The human GRINL1A gene defines a complex transcription unit, an unusual form of gene organization in eukaryotes.</title>
        <authorList>
            <person name="Roginski R.S."/>
            <person name="Mohan Raj B.K."/>
            <person name="Birditt B."/>
            <person name="Rowen L."/>
        </authorList>
    </citation>
    <scope>NUCLEOTIDE SEQUENCE [MRNA] (ISOFORMS 4 AND 5)</scope>
    <source>
        <tissue>Brain</tissue>
        <tissue>Heart</tissue>
    </source>
</reference>
<reference key="2">
    <citation type="journal article" date="2011" name="BMC Syst. Biol.">
        <title>Initial characterization of the human central proteome.</title>
        <authorList>
            <person name="Burkard T.R."/>
            <person name="Planyavsky M."/>
            <person name="Kaupe I."/>
            <person name="Breitwieser F.P."/>
            <person name="Buerckstuemmer T."/>
            <person name="Bennett K.L."/>
            <person name="Superti-Furga G."/>
            <person name="Colinge J."/>
        </authorList>
    </citation>
    <scope>IDENTIFICATION BY MASS SPECTROMETRY [LARGE SCALE ANALYSIS]</scope>
</reference>
<reference key="3">
    <citation type="journal article" date="2013" name="J. Proteome Res.">
        <title>Toward a comprehensive characterization of a human cancer cell phosphoproteome.</title>
        <authorList>
            <person name="Zhou H."/>
            <person name="Di Palma S."/>
            <person name="Preisinger C."/>
            <person name="Peng M."/>
            <person name="Polat A.N."/>
            <person name="Heck A.J."/>
            <person name="Mohammed S."/>
        </authorList>
    </citation>
    <scope>IDENTIFICATION BY MASS SPECTROMETRY [LARGE SCALE ANALYSIS]</scope>
    <source>
        <tissue>Cervix carcinoma</tissue>
        <tissue>Erythroleukemia</tissue>
    </source>
</reference>
<feature type="chain" id="PRO_0000326233" description="DNA-directed RNA polymerase II subunit GRINL1A, isoforms 4/5">
    <location>
        <begin position="1"/>
        <end position="148"/>
    </location>
</feature>
<feature type="region of interest" description="Disordered" evidence="1">
    <location>
        <begin position="1"/>
        <end position="66"/>
    </location>
</feature>
<feature type="compositionally biased region" description="Low complexity" evidence="1">
    <location>
        <begin position="53"/>
        <end position="66"/>
    </location>
</feature>
<feature type="splice variant" id="VSP_032624" description="In isoform 5." evidence="2">
    <location>
        <begin position="77"/>
        <end position="138"/>
    </location>
</feature>
<feature type="sequence variant" id="VAR_054029" description="In dbSNP:rs11858659.">
    <original>A</original>
    <variation>P</variation>
    <location>
        <position position="127"/>
    </location>
</feature>
<comment type="alternative products">
    <event type="alternative splicing"/>
    <isoform>
        <id>Q6EEV4-1</id>
        <name>4</name>
        <name>Gdown4</name>
        <sequence type="displayed"/>
    </isoform>
    <isoform>
        <id>P0CAP2-1</id>
        <name>1</name>
        <name>Gdown1</name>
        <sequence type="external"/>
    </isoform>
    <isoform>
        <id>P0CAP2-2</id>
        <name>2</name>
        <name>Gdown6</name>
        <sequence type="external"/>
    </isoform>
    <isoform>
        <id>P0CAP2-3</id>
        <name>3</name>
        <sequence type="external"/>
    </isoform>
    <isoform>
        <id>Q6EEV4-2</id>
        <name>5</name>
        <name>Gdown3</name>
        <sequence type="described" ref="VSP_032624"/>
    </isoform>
    <isoform>
        <id>P0CAP1-11</id>
        <name>11</name>
        <name>Gcom1</name>
        <name>GRINL1A complex locus protein 1</name>
        <sequence type="external"/>
    </isoform>
    <text>Additional isoforms seem to exist.</text>
</comment>
<comment type="miscellaneous">
    <text>The adjacent MYZAP and POLR2M genes are part of a complex transcription unit. The respective transcripts derive from different promoters and are alternatively spliced. In human, some transcripts of the upstream promoter of MYZAP use exons of the downstream POLR2M gene.</text>
</comment>
<accession>Q6EEV4</accession>
<accession>Q6EEV7</accession>